<accession>Q1GXG2</accession>
<reference key="1">
    <citation type="submission" date="2006-03" db="EMBL/GenBank/DDBJ databases">
        <title>Complete sequence of Methylobacillus flagellatus KT.</title>
        <authorList>
            <consortium name="US DOE Joint Genome Institute"/>
            <person name="Copeland A."/>
            <person name="Lucas S."/>
            <person name="Lapidus A."/>
            <person name="Barry K."/>
            <person name="Detter J.C."/>
            <person name="Glavina del Rio T."/>
            <person name="Hammon N."/>
            <person name="Israni S."/>
            <person name="Dalin E."/>
            <person name="Tice H."/>
            <person name="Pitluck S."/>
            <person name="Brettin T."/>
            <person name="Bruce D."/>
            <person name="Han C."/>
            <person name="Tapia R."/>
            <person name="Saunders E."/>
            <person name="Gilna P."/>
            <person name="Schmutz J."/>
            <person name="Larimer F."/>
            <person name="Land M."/>
            <person name="Kyrpides N."/>
            <person name="Anderson I."/>
            <person name="Richardson P."/>
        </authorList>
    </citation>
    <scope>NUCLEOTIDE SEQUENCE [LARGE SCALE GENOMIC DNA]</scope>
    <source>
        <strain>ATCC 51484 / DSM 6875 / VKM B-1610 / KT</strain>
    </source>
</reference>
<gene>
    <name type="ordered locus">Mfla_0096</name>
</gene>
<feature type="chain" id="PRO_0000346492" description="PKHD-type hydroxylase Mfla_0096">
    <location>
        <begin position="1"/>
        <end position="176"/>
    </location>
</feature>
<feature type="domain" description="Fe2OG dioxygenase">
    <location>
        <begin position="78"/>
        <end position="147"/>
    </location>
</feature>
<protein>
    <recommendedName>
        <fullName>PKHD-type hydroxylase Mfla_0096</fullName>
        <ecNumber>1.14.11.-</ecNumber>
    </recommendedName>
</protein>
<evidence type="ECO:0000250" key="1"/>
<keyword id="KW-0223">Dioxygenase</keyword>
<keyword id="KW-0560">Oxidoreductase</keyword>
<keyword id="KW-1185">Reference proteome</keyword>
<proteinExistence type="inferred from homology"/>
<sequence length="176" mass="19431">MLITIPEVFTPEEAESIRQRLDATEWLDGKVTAGYQSAKAKNNLQLAENHPLAIELGDLIVSRLTQHPLFMSAALPRKVFPPLFNRYESGQSFGFHIDNAVRSLSGSRERVRTDLSSTLFFTPPEDYDGGELIRHASNQIARGTYGAVSRHQPAQGHAGDPGGTHLIFLLDPEPDP</sequence>
<organism>
    <name type="scientific">Methylobacillus flagellatus (strain ATCC 51484 / DSM 6875 / VKM B-1610 / KT)</name>
    <dbReference type="NCBI Taxonomy" id="265072"/>
    <lineage>
        <taxon>Bacteria</taxon>
        <taxon>Pseudomonadati</taxon>
        <taxon>Pseudomonadota</taxon>
        <taxon>Betaproteobacteria</taxon>
        <taxon>Nitrosomonadales</taxon>
        <taxon>Methylophilaceae</taxon>
        <taxon>Methylobacillus</taxon>
    </lineage>
</organism>
<comment type="cofactor">
    <cofactor evidence="1">
        <name>Fe(2+)</name>
        <dbReference type="ChEBI" id="CHEBI:29033"/>
    </cofactor>
    <text evidence="1">Binds 1 Fe(2+) ion per subunit.</text>
</comment>
<comment type="cofactor">
    <cofactor evidence="1">
        <name>L-ascorbate</name>
        <dbReference type="ChEBI" id="CHEBI:38290"/>
    </cofactor>
</comment>
<name>Y096_METFK</name>
<dbReference type="EC" id="1.14.11.-"/>
<dbReference type="EMBL" id="CP000284">
    <property type="protein sequence ID" value="ABE48367.1"/>
    <property type="molecule type" value="Genomic_DNA"/>
</dbReference>
<dbReference type="RefSeq" id="WP_011478464.1">
    <property type="nucleotide sequence ID" value="NC_007947.1"/>
</dbReference>
<dbReference type="SMR" id="Q1GXG2"/>
<dbReference type="STRING" id="265072.Mfla_0096"/>
<dbReference type="KEGG" id="mfa:Mfla_0096"/>
<dbReference type="eggNOG" id="COG3128">
    <property type="taxonomic scope" value="Bacteria"/>
</dbReference>
<dbReference type="HOGENOM" id="CLU_1523431_0_0_4"/>
<dbReference type="Proteomes" id="UP000002440">
    <property type="component" value="Chromosome"/>
</dbReference>
<dbReference type="GO" id="GO:0016706">
    <property type="term" value="F:2-oxoglutarate-dependent dioxygenase activity"/>
    <property type="evidence" value="ECO:0007669"/>
    <property type="project" value="InterPro"/>
</dbReference>
<dbReference type="GO" id="GO:0005506">
    <property type="term" value="F:iron ion binding"/>
    <property type="evidence" value="ECO:0007669"/>
    <property type="project" value="InterPro"/>
</dbReference>
<dbReference type="GO" id="GO:0031418">
    <property type="term" value="F:L-ascorbic acid binding"/>
    <property type="evidence" value="ECO:0007669"/>
    <property type="project" value="InterPro"/>
</dbReference>
<dbReference type="GO" id="GO:0006974">
    <property type="term" value="P:DNA damage response"/>
    <property type="evidence" value="ECO:0007669"/>
    <property type="project" value="TreeGrafter"/>
</dbReference>
<dbReference type="GO" id="GO:0006879">
    <property type="term" value="P:intracellular iron ion homeostasis"/>
    <property type="evidence" value="ECO:0007669"/>
    <property type="project" value="TreeGrafter"/>
</dbReference>
<dbReference type="Gene3D" id="2.60.120.620">
    <property type="entry name" value="q2cbj1_9rhob like domain"/>
    <property type="match status" value="1"/>
</dbReference>
<dbReference type="InterPro" id="IPR023550">
    <property type="entry name" value="PKHD_hydroxylase"/>
</dbReference>
<dbReference type="InterPro" id="IPR006620">
    <property type="entry name" value="Pro_4_hyd_alph"/>
</dbReference>
<dbReference type="NCBIfam" id="NF003974">
    <property type="entry name" value="PRK05467.1-3"/>
    <property type="match status" value="1"/>
</dbReference>
<dbReference type="NCBIfam" id="NF003975">
    <property type="entry name" value="PRK05467.1-4"/>
    <property type="match status" value="1"/>
</dbReference>
<dbReference type="PANTHER" id="PTHR41536">
    <property type="entry name" value="PKHD-TYPE HYDROXYLASE YBIX"/>
    <property type="match status" value="1"/>
</dbReference>
<dbReference type="PANTHER" id="PTHR41536:SF1">
    <property type="entry name" value="PKHD-TYPE HYDROXYLASE YBIX"/>
    <property type="match status" value="1"/>
</dbReference>
<dbReference type="SMART" id="SM00702">
    <property type="entry name" value="P4Hc"/>
    <property type="match status" value="1"/>
</dbReference>